<proteinExistence type="inferred from homology"/>
<protein>
    <recommendedName>
        <fullName>Putative RING finger protein 157L</fullName>
    </recommendedName>
</protein>
<dbReference type="EMBL" id="AF303741">
    <property type="protein sequence ID" value="AAB94467.1"/>
    <property type="molecule type" value="Genomic_DNA"/>
</dbReference>
<dbReference type="PIR" id="T03093">
    <property type="entry name" value="T03093"/>
</dbReference>
<dbReference type="RefSeq" id="NP_149620.1">
    <property type="nucleotide sequence ID" value="NC_003038.1"/>
</dbReference>
<dbReference type="SMR" id="O55756"/>
<dbReference type="KEGG" id="vg:1733167"/>
<dbReference type="OrthoDB" id="28917at10239"/>
<dbReference type="Proteomes" id="UP000001359">
    <property type="component" value="Genome"/>
</dbReference>
<dbReference type="GO" id="GO:0004842">
    <property type="term" value="F:ubiquitin-protein transferase activity"/>
    <property type="evidence" value="ECO:0007669"/>
    <property type="project" value="TreeGrafter"/>
</dbReference>
<dbReference type="GO" id="GO:0008270">
    <property type="term" value="F:zinc ion binding"/>
    <property type="evidence" value="ECO:0007669"/>
    <property type="project" value="UniProtKB-KW"/>
</dbReference>
<dbReference type="Gene3D" id="3.30.40.10">
    <property type="entry name" value="Zinc/RING finger domain, C3HC4 (zinc finger)"/>
    <property type="match status" value="1"/>
</dbReference>
<dbReference type="InterPro" id="IPR001841">
    <property type="entry name" value="Znf_RING"/>
</dbReference>
<dbReference type="InterPro" id="IPR013083">
    <property type="entry name" value="Znf_RING/FYVE/PHD"/>
</dbReference>
<dbReference type="PANTHER" id="PTHR42647:SF72">
    <property type="entry name" value="EF-HAND CALCIUM-BINDING DOMAIN-CONTAINING PROTEIN 4A"/>
    <property type="match status" value="1"/>
</dbReference>
<dbReference type="PANTHER" id="PTHR42647">
    <property type="entry name" value="SBP (S-RIBONUCLEASE BINDING PROTEIN) FAMILY PROTEIN"/>
    <property type="match status" value="1"/>
</dbReference>
<dbReference type="Pfam" id="PF13920">
    <property type="entry name" value="zf-C3HC4_3"/>
    <property type="match status" value="1"/>
</dbReference>
<dbReference type="SMART" id="SM00184">
    <property type="entry name" value="RING"/>
    <property type="match status" value="1"/>
</dbReference>
<dbReference type="SUPFAM" id="SSF57850">
    <property type="entry name" value="RING/U-box"/>
    <property type="match status" value="1"/>
</dbReference>
<dbReference type="PROSITE" id="PS50089">
    <property type="entry name" value="ZF_RING_2"/>
    <property type="match status" value="1"/>
</dbReference>
<evidence type="ECO:0000255" key="1">
    <source>
        <dbReference type="PROSITE-ProRule" id="PRU00175"/>
    </source>
</evidence>
<evidence type="ECO:0000305" key="2"/>
<organism>
    <name type="scientific">Invertebrate iridescent virus 6</name>
    <name type="common">IIV-6</name>
    <name type="synonym">Chilo iridescent virus</name>
    <dbReference type="NCBI Taxonomy" id="176652"/>
    <lineage>
        <taxon>Viruses</taxon>
        <taxon>Varidnaviria</taxon>
        <taxon>Bamfordvirae</taxon>
        <taxon>Nucleocytoviricota</taxon>
        <taxon>Megaviricetes</taxon>
        <taxon>Pimascovirales</taxon>
        <taxon>Iridoviridae</taxon>
        <taxon>Betairidovirinae</taxon>
        <taxon>Iridovirus</taxon>
    </lineage>
</organism>
<comment type="similarity">
    <text evidence="2">Belongs to the IIV-6 157L family.</text>
</comment>
<feature type="chain" id="PRO_0000377907" description="Putative RING finger protein 157L">
    <location>
        <begin position="1"/>
        <end position="152"/>
    </location>
</feature>
<feature type="zinc finger region" description="RING-type" evidence="1">
    <location>
        <begin position="111"/>
        <end position="146"/>
    </location>
</feature>
<name>VF157_IIV6</name>
<keyword id="KW-0479">Metal-binding</keyword>
<keyword id="KW-1185">Reference proteome</keyword>
<keyword id="KW-0862">Zinc</keyword>
<keyword id="KW-0863">Zinc-finger</keyword>
<gene>
    <name type="ORF">IIV6-157L</name>
</gene>
<organismHost>
    <name type="scientific">Acheta domesticus</name>
    <name type="common">House cricket</name>
    <dbReference type="NCBI Taxonomy" id="6997"/>
</organismHost>
<organismHost>
    <name type="scientific">Chilo suppressalis</name>
    <name type="common">Asiatic rice borer moth</name>
    <dbReference type="NCBI Taxonomy" id="168631"/>
</organismHost>
<organismHost>
    <name type="scientific">Gryllus bimaculatus</name>
    <name type="common">Two-spotted cricket</name>
    <dbReference type="NCBI Taxonomy" id="6999"/>
</organismHost>
<organismHost>
    <name type="scientific">Gryllus campestris</name>
    <dbReference type="NCBI Taxonomy" id="58607"/>
</organismHost>
<organismHost>
    <name type="scientific">Spodoptera frugiperda</name>
    <name type="common">Fall armyworm</name>
    <dbReference type="NCBI Taxonomy" id="7108"/>
</organismHost>
<accession>O55756</accession>
<sequence>MEIDKVFCDTIMYQDLEILQDYLDTFKLDPQLTLILKKYKHASPFWKSDEKSFWIFEGILHDEAERVKQLNGVKTRNKVGFIYIKQIFYDIVELLLEATNDKKASSIDSRCVVCYENEICIKIQPCNHFVVCKSCFNRLNTCPMCRSKINKS</sequence>
<reference key="1">
    <citation type="journal article" date="2001" name="Virology">
        <title>Analysis of the first complete DNA sequence of an invertebrate iridovirus: coding strategy of the genome of Chilo iridescent virus.</title>
        <authorList>
            <person name="Jakob N.J."/>
            <person name="Mueller K."/>
            <person name="Bahr U."/>
            <person name="Darai G."/>
        </authorList>
    </citation>
    <scope>NUCLEOTIDE SEQUENCE [LARGE SCALE GENOMIC DNA]</scope>
</reference>
<reference key="2">
    <citation type="journal article" date="2007" name="Virol. J.">
        <title>Comparative genomic analysis of the family Iridoviridae: re-annotating and defining the core set of iridovirus genes.</title>
        <authorList>
            <person name="Eaton H.E."/>
            <person name="Metcalf J."/>
            <person name="Penny E."/>
            <person name="Tcherepanov V."/>
            <person name="Upton C."/>
            <person name="Brunetti C.R."/>
        </authorList>
    </citation>
    <scope>GENOME REANNOTATION</scope>
</reference>